<comment type="subunit">
    <text evidence="7">Component of the mitochondrial ribosome small subunit.</text>
</comment>
<comment type="subcellular location">
    <subcellularLocation>
        <location evidence="2 6">Mitochondrion</location>
    </subcellularLocation>
    <subcellularLocation>
        <location evidence="2">Plastid</location>
        <location evidence="2">Chloroplast</location>
    </subcellularLocation>
</comment>
<comment type="tissue specificity">
    <text evidence="3">Expressed at low levels in flowers, and, to a lower extent, in leaves, stems and roots.</text>
</comment>
<comment type="miscellaneous">
    <text evidence="2">This is the only bS16 protein that is targeted to mitochondria.</text>
</comment>
<comment type="similarity">
    <text evidence="7">Belongs to the bacterial ribosomal protein bS16 family.</text>
</comment>
<protein>
    <recommendedName>
        <fullName evidence="6 7">Small ribosomal subunit protein bS16m/bS16c</fullName>
    </recommendedName>
    <alternativeName>
        <fullName evidence="5">30S ribosomal protein S16-2, mitochondrial/chloroplastic</fullName>
    </alternativeName>
</protein>
<name>RT16_ARATH</name>
<organism>
    <name type="scientific">Arabidopsis thaliana</name>
    <name type="common">Mouse-ear cress</name>
    <dbReference type="NCBI Taxonomy" id="3702"/>
    <lineage>
        <taxon>Eukaryota</taxon>
        <taxon>Viridiplantae</taxon>
        <taxon>Streptophyta</taxon>
        <taxon>Embryophyta</taxon>
        <taxon>Tracheophyta</taxon>
        <taxon>Spermatophyta</taxon>
        <taxon>Magnoliopsida</taxon>
        <taxon>eudicotyledons</taxon>
        <taxon>Gunneridae</taxon>
        <taxon>Pentapetalae</taxon>
        <taxon>rosids</taxon>
        <taxon>malvids</taxon>
        <taxon>Brassicales</taxon>
        <taxon>Brassicaceae</taxon>
        <taxon>Camelineae</taxon>
        <taxon>Arabidopsis</taxon>
    </lineage>
</organism>
<accession>Q9LTS6</accession>
<accession>Q8LDI6</accession>
<keyword id="KW-0002">3D-structure</keyword>
<keyword id="KW-0150">Chloroplast</keyword>
<keyword id="KW-0496">Mitochondrion</keyword>
<keyword id="KW-0934">Plastid</keyword>
<keyword id="KW-1185">Reference proteome</keyword>
<keyword id="KW-0687">Ribonucleoprotein</keyword>
<keyword id="KW-0689">Ribosomal protein</keyword>
<keyword id="KW-0809">Transit peptide</keyword>
<evidence type="ECO:0000256" key="1">
    <source>
        <dbReference type="SAM" id="MobiDB-lite"/>
    </source>
</evidence>
<evidence type="ECO:0000269" key="2">
    <source>
    </source>
</evidence>
<evidence type="ECO:0000269" key="3">
    <source>
    </source>
</evidence>
<evidence type="ECO:0000303" key="4">
    <source>
    </source>
</evidence>
<evidence type="ECO:0000303" key="5">
    <source>
    </source>
</evidence>
<evidence type="ECO:0000303" key="6">
    <source>
    </source>
</evidence>
<evidence type="ECO:0000305" key="7"/>
<evidence type="ECO:0000305" key="8">
    <source>
    </source>
</evidence>
<evidence type="ECO:0000312" key="9">
    <source>
        <dbReference type="Araport" id="AT5G56940"/>
    </source>
</evidence>
<evidence type="ECO:0000312" key="10">
    <source>
        <dbReference type="EMBL" id="BAA97024.1"/>
    </source>
</evidence>
<gene>
    <name evidence="5" type="primary">RPS16-2</name>
    <name evidence="4" type="synonym">S16-1</name>
    <name evidence="9" type="ordered locus">At5g56940</name>
    <name evidence="10" type="ORF">MHM17.5</name>
</gene>
<proteinExistence type="evidence at protein level"/>
<reference key="1">
    <citation type="journal article" date="2000" name="DNA Res.">
        <title>Structural analysis of Arabidopsis thaliana chromosome 5. X. Sequence features of the regions of 3,076,755 bp covered by sixty P1 and TAC clones.</title>
        <authorList>
            <person name="Sato S."/>
            <person name="Nakamura Y."/>
            <person name="Kaneko T."/>
            <person name="Katoh T."/>
            <person name="Asamizu E."/>
            <person name="Kotani H."/>
            <person name="Tabata S."/>
        </authorList>
    </citation>
    <scope>NUCLEOTIDE SEQUENCE [LARGE SCALE GENOMIC DNA]</scope>
    <source>
        <strain>cv. Columbia</strain>
    </source>
</reference>
<reference key="2">
    <citation type="journal article" date="2017" name="Plant J.">
        <title>Araport11: a complete reannotation of the Arabidopsis thaliana reference genome.</title>
        <authorList>
            <person name="Cheng C.Y."/>
            <person name="Krishnakumar V."/>
            <person name="Chan A.P."/>
            <person name="Thibaud-Nissen F."/>
            <person name="Schobel S."/>
            <person name="Town C.D."/>
        </authorList>
    </citation>
    <scope>GENOME REANNOTATION</scope>
    <source>
        <strain>cv. Columbia</strain>
    </source>
</reference>
<reference key="3">
    <citation type="journal article" date="2003" name="Science">
        <title>Empirical analysis of transcriptional activity in the Arabidopsis genome.</title>
        <authorList>
            <person name="Yamada K."/>
            <person name="Lim J."/>
            <person name="Dale J.M."/>
            <person name="Chen H."/>
            <person name="Shinn P."/>
            <person name="Palm C.J."/>
            <person name="Southwick A.M."/>
            <person name="Wu H.C."/>
            <person name="Kim C.J."/>
            <person name="Nguyen M."/>
            <person name="Pham P.K."/>
            <person name="Cheuk R.F."/>
            <person name="Karlin-Newmann G."/>
            <person name="Liu S.X."/>
            <person name="Lam B."/>
            <person name="Sakano H."/>
            <person name="Wu T."/>
            <person name="Yu G."/>
            <person name="Miranda M."/>
            <person name="Quach H.L."/>
            <person name="Tripp M."/>
            <person name="Chang C.H."/>
            <person name="Lee J.M."/>
            <person name="Toriumi M.J."/>
            <person name="Chan M.M."/>
            <person name="Tang C.C."/>
            <person name="Onodera C.S."/>
            <person name="Deng J.M."/>
            <person name="Akiyama K."/>
            <person name="Ansari Y."/>
            <person name="Arakawa T."/>
            <person name="Banh J."/>
            <person name="Banno F."/>
            <person name="Bowser L."/>
            <person name="Brooks S.Y."/>
            <person name="Carninci P."/>
            <person name="Chao Q."/>
            <person name="Choy N."/>
            <person name="Enju A."/>
            <person name="Goldsmith A.D."/>
            <person name="Gurjal M."/>
            <person name="Hansen N.F."/>
            <person name="Hayashizaki Y."/>
            <person name="Johnson-Hopson C."/>
            <person name="Hsuan V.W."/>
            <person name="Iida K."/>
            <person name="Karnes M."/>
            <person name="Khan S."/>
            <person name="Koesema E."/>
            <person name="Ishida J."/>
            <person name="Jiang P.X."/>
            <person name="Jones T."/>
            <person name="Kawai J."/>
            <person name="Kamiya A."/>
            <person name="Meyers C."/>
            <person name="Nakajima M."/>
            <person name="Narusaka M."/>
            <person name="Seki M."/>
            <person name="Sakurai T."/>
            <person name="Satou M."/>
            <person name="Tamse R."/>
            <person name="Vaysberg M."/>
            <person name="Wallender E.K."/>
            <person name="Wong C."/>
            <person name="Yamamura Y."/>
            <person name="Yuan S."/>
            <person name="Shinozaki K."/>
            <person name="Davis R.W."/>
            <person name="Theologis A."/>
            <person name="Ecker J.R."/>
        </authorList>
    </citation>
    <scope>NUCLEOTIDE SEQUENCE [LARGE SCALE MRNA]</scope>
    <source>
        <strain>cv. Columbia</strain>
    </source>
</reference>
<reference key="4">
    <citation type="submission" date="2002-03" db="EMBL/GenBank/DDBJ databases">
        <title>Full-length cDNA from Arabidopsis thaliana.</title>
        <authorList>
            <person name="Brover V.V."/>
            <person name="Troukhan M.E."/>
            <person name="Alexandrov N.A."/>
            <person name="Lu Y.-P."/>
            <person name="Flavell R.B."/>
            <person name="Feldmann K.A."/>
        </authorList>
    </citation>
    <scope>NUCLEOTIDE SEQUENCE [LARGE SCALE MRNA]</scope>
</reference>
<reference key="5">
    <citation type="journal article" date="1996" name="Plant J.">
        <title>A transposon insertion in the Arabidopsis SSR16 gene causes an embryo-defective lethal mutation.</title>
        <authorList>
            <person name="Tsugeki R."/>
            <person name="Kochieva E.Z."/>
            <person name="Fedoroff N.V."/>
        </authorList>
    </citation>
    <scope>TISSUE SPECIFICITY</scope>
    <source>
        <strain>cv. No-0</strain>
    </source>
</reference>
<reference key="6">
    <citation type="journal article" date="2006" name="Mol. Biol. Evol.">
        <title>Comparative analysis of bacterial-origin genes for plant mitochondrial ribosomal proteins.</title>
        <authorList>
            <person name="Bonen L."/>
            <person name="Calixte S."/>
        </authorList>
    </citation>
    <scope>NOMENCLATURE</scope>
    <scope>GENE FAMILY</scope>
</reference>
<reference key="7">
    <citation type="journal article" date="2008" name="Mol. Biol. Evol.">
        <title>Substitution of the gene for chloroplast RPS16 was assisted by generation of a dual targeting signal.</title>
        <authorList>
            <person name="Ueda M."/>
            <person name="Nishikawa T."/>
            <person name="Fujimoto M."/>
            <person name="Takanashi H."/>
            <person name="Arimura S."/>
            <person name="Tsutsumi N."/>
            <person name="Kadowaki K."/>
        </authorList>
    </citation>
    <scope>SUBCELLULAR LOCATION</scope>
    <scope>NOMENCLATURE</scope>
    <source>
        <strain>cv. Columbia</strain>
    </source>
</reference>
<reference key="8">
    <citation type="journal article" date="2023" name="Plant Cell">
        <title>An updated nomenclature for plant ribosomal protein genes.</title>
        <authorList>
            <person name="Scarpin M.R."/>
            <person name="Busche M."/>
            <person name="Martinez R.E."/>
            <person name="Harper L.C."/>
            <person name="Reiser L."/>
            <person name="Szakonyi D."/>
            <person name="Merchante C."/>
            <person name="Lan T."/>
            <person name="Xiong W."/>
            <person name="Mo B."/>
            <person name="Tang G."/>
            <person name="Chen X."/>
            <person name="Bailey-Serres J."/>
            <person name="Browning K.S."/>
            <person name="Brunkard J.O."/>
        </authorList>
    </citation>
    <scope>NOMENCLATURE</scope>
</reference>
<feature type="transit peptide" description="Chloroplast and mitochondrion" evidence="8">
    <location>
        <begin position="1"/>
        <end position="7"/>
    </location>
</feature>
<feature type="chain" id="PRO_0000436965" description="Small ribosomal subunit protein bS16m/bS16c">
    <location>
        <begin position="8"/>
        <end position="135"/>
    </location>
</feature>
<feature type="region of interest" description="Disordered" evidence="1">
    <location>
        <begin position="87"/>
        <end position="135"/>
    </location>
</feature>
<feature type="compositionally biased region" description="Basic and acidic residues" evidence="1">
    <location>
        <begin position="124"/>
        <end position="135"/>
    </location>
</feature>
<feature type="sequence conflict" description="In Ref. 4; AAM63199." evidence="7" ref="4">
    <original>TEAKS</original>
    <variation>SEDKI</variation>
    <location>
        <begin position="130"/>
        <end position="134"/>
    </location>
</feature>
<sequence length="135" mass="15101">MVVRIRLSRFGCKNRPFFRVMAADSRSPRDGKHLEVLGYFNPLPGQDGGKRMGLKFDRIKYWLSVGAQPSDPVQRLLFRSGLLPPPPMVAMGRKGGARDTRPVDPMTGRYVDAENKTVNANDNQPKEEDTEAKSA</sequence>
<dbReference type="EMBL" id="AB024035">
    <property type="protein sequence ID" value="BAA97024.1"/>
    <property type="molecule type" value="Genomic_DNA"/>
</dbReference>
<dbReference type="EMBL" id="CP002688">
    <property type="protein sequence ID" value="AED96825.1"/>
    <property type="molecule type" value="Genomic_DNA"/>
</dbReference>
<dbReference type="EMBL" id="AY034927">
    <property type="protein sequence ID" value="AAK59434.1"/>
    <property type="molecule type" value="mRNA"/>
</dbReference>
<dbReference type="EMBL" id="AY059147">
    <property type="protein sequence ID" value="AAL15253.1"/>
    <property type="molecule type" value="mRNA"/>
</dbReference>
<dbReference type="EMBL" id="AY085989">
    <property type="protein sequence ID" value="AAM63199.1"/>
    <property type="molecule type" value="mRNA"/>
</dbReference>
<dbReference type="RefSeq" id="NP_200504.1">
    <property type="nucleotide sequence ID" value="NM_125076.4"/>
</dbReference>
<dbReference type="PDB" id="6XYW">
    <property type="method" value="EM"/>
    <property type="resolution" value="3.86 A"/>
    <property type="chains" value="Bo=1-135"/>
</dbReference>
<dbReference type="PDBsum" id="6XYW"/>
<dbReference type="EMDB" id="EMD-10654"/>
<dbReference type="SMR" id="Q9LTS6"/>
<dbReference type="FunCoup" id="Q9LTS6">
    <property type="interactions" value="3123"/>
</dbReference>
<dbReference type="IntAct" id="Q9LTS6">
    <property type="interactions" value="1"/>
</dbReference>
<dbReference type="STRING" id="3702.Q9LTS6"/>
<dbReference type="PaxDb" id="3702-AT5G56940.1"/>
<dbReference type="ProteomicsDB" id="226718"/>
<dbReference type="EnsemblPlants" id="AT5G56940.1">
    <property type="protein sequence ID" value="AT5G56940.1"/>
    <property type="gene ID" value="AT5G56940"/>
</dbReference>
<dbReference type="GeneID" id="835796"/>
<dbReference type="Gramene" id="AT5G56940.1">
    <property type="protein sequence ID" value="AT5G56940.1"/>
    <property type="gene ID" value="AT5G56940"/>
</dbReference>
<dbReference type="KEGG" id="ath:AT5G56940"/>
<dbReference type="Araport" id="AT5G56940"/>
<dbReference type="TAIR" id="AT5G56940"/>
<dbReference type="eggNOG" id="KOG3419">
    <property type="taxonomic scope" value="Eukaryota"/>
</dbReference>
<dbReference type="HOGENOM" id="CLU_100590_2_0_1"/>
<dbReference type="InParanoid" id="Q9LTS6"/>
<dbReference type="OMA" id="PNDYNER"/>
<dbReference type="OrthoDB" id="407221at2759"/>
<dbReference type="PhylomeDB" id="Q9LTS6"/>
<dbReference type="PRO" id="PR:Q9LTS6"/>
<dbReference type="Proteomes" id="UP000006548">
    <property type="component" value="Chromosome 5"/>
</dbReference>
<dbReference type="ExpressionAtlas" id="Q9LTS6">
    <property type="expression patterns" value="baseline and differential"/>
</dbReference>
<dbReference type="GO" id="GO:0009507">
    <property type="term" value="C:chloroplast"/>
    <property type="evidence" value="ECO:0007669"/>
    <property type="project" value="UniProtKB-SubCell"/>
</dbReference>
<dbReference type="GO" id="GO:0005739">
    <property type="term" value="C:mitochondrion"/>
    <property type="evidence" value="ECO:0000314"/>
    <property type="project" value="TAIR"/>
</dbReference>
<dbReference type="GO" id="GO:0009536">
    <property type="term" value="C:plastid"/>
    <property type="evidence" value="ECO:0000314"/>
    <property type="project" value="TAIR"/>
</dbReference>
<dbReference type="GO" id="GO:1990904">
    <property type="term" value="C:ribonucleoprotein complex"/>
    <property type="evidence" value="ECO:0007669"/>
    <property type="project" value="UniProtKB-KW"/>
</dbReference>
<dbReference type="GO" id="GO:0005840">
    <property type="term" value="C:ribosome"/>
    <property type="evidence" value="ECO:0007669"/>
    <property type="project" value="UniProtKB-KW"/>
</dbReference>
<dbReference type="GO" id="GO:0003735">
    <property type="term" value="F:structural constituent of ribosome"/>
    <property type="evidence" value="ECO:0007669"/>
    <property type="project" value="InterPro"/>
</dbReference>
<dbReference type="GO" id="GO:0006412">
    <property type="term" value="P:translation"/>
    <property type="evidence" value="ECO:0007669"/>
    <property type="project" value="InterPro"/>
</dbReference>
<dbReference type="FunFam" id="3.30.1320.10:FF:000007">
    <property type="entry name" value="30S ribosomal protein S16"/>
    <property type="match status" value="1"/>
</dbReference>
<dbReference type="Gene3D" id="3.30.1320.10">
    <property type="match status" value="1"/>
</dbReference>
<dbReference type="HAMAP" id="MF_00385">
    <property type="entry name" value="Ribosomal_bS16"/>
    <property type="match status" value="1"/>
</dbReference>
<dbReference type="InterPro" id="IPR000307">
    <property type="entry name" value="Ribosomal_bS16"/>
</dbReference>
<dbReference type="InterPro" id="IPR023803">
    <property type="entry name" value="Ribosomal_bS16_dom_sf"/>
</dbReference>
<dbReference type="NCBIfam" id="TIGR00002">
    <property type="entry name" value="S16"/>
    <property type="match status" value="1"/>
</dbReference>
<dbReference type="PANTHER" id="PTHR12919">
    <property type="entry name" value="30S RIBOSOMAL PROTEIN S16"/>
    <property type="match status" value="1"/>
</dbReference>
<dbReference type="PANTHER" id="PTHR12919:SF39">
    <property type="entry name" value="SMALL RIBOSOMAL SUBUNIT PROTEIN BS16M_BS16C"/>
    <property type="match status" value="1"/>
</dbReference>
<dbReference type="Pfam" id="PF00886">
    <property type="entry name" value="Ribosomal_S16"/>
    <property type="match status" value="1"/>
</dbReference>
<dbReference type="SUPFAM" id="SSF54565">
    <property type="entry name" value="Ribosomal protein S16"/>
    <property type="match status" value="1"/>
</dbReference>